<dbReference type="EMBL" id="AE016795">
    <property type="protein sequence ID" value="AAO09669.1"/>
    <property type="molecule type" value="Genomic_DNA"/>
</dbReference>
<dbReference type="RefSeq" id="WP_011079199.1">
    <property type="nucleotide sequence ID" value="NC_004459.3"/>
</dbReference>
<dbReference type="GeneID" id="93895476"/>
<dbReference type="KEGG" id="vvu:VV1_1209"/>
<dbReference type="HOGENOM" id="CLU_092227_0_2_6"/>
<dbReference type="Proteomes" id="UP000002275">
    <property type="component" value="Chromosome 1"/>
</dbReference>
<dbReference type="GO" id="GO:0015934">
    <property type="term" value="C:large ribosomal subunit"/>
    <property type="evidence" value="ECO:0007669"/>
    <property type="project" value="InterPro"/>
</dbReference>
<dbReference type="GO" id="GO:0070180">
    <property type="term" value="F:large ribosomal subunit rRNA binding"/>
    <property type="evidence" value="ECO:0007669"/>
    <property type="project" value="UniProtKB-UniRule"/>
</dbReference>
<dbReference type="GO" id="GO:0003735">
    <property type="term" value="F:structural constituent of ribosome"/>
    <property type="evidence" value="ECO:0007669"/>
    <property type="project" value="InterPro"/>
</dbReference>
<dbReference type="GO" id="GO:0006412">
    <property type="term" value="P:translation"/>
    <property type="evidence" value="ECO:0007669"/>
    <property type="project" value="UniProtKB-UniRule"/>
</dbReference>
<dbReference type="CDD" id="cd05797">
    <property type="entry name" value="Ribosomal_L10"/>
    <property type="match status" value="1"/>
</dbReference>
<dbReference type="FunFam" id="3.30.70.1730:FF:000001">
    <property type="entry name" value="50S ribosomal protein L10"/>
    <property type="match status" value="1"/>
</dbReference>
<dbReference type="Gene3D" id="3.30.70.1730">
    <property type="match status" value="1"/>
</dbReference>
<dbReference type="Gene3D" id="6.10.250.2350">
    <property type="match status" value="1"/>
</dbReference>
<dbReference type="HAMAP" id="MF_00362">
    <property type="entry name" value="Ribosomal_uL10"/>
    <property type="match status" value="1"/>
</dbReference>
<dbReference type="InterPro" id="IPR001790">
    <property type="entry name" value="Ribosomal_uL10"/>
</dbReference>
<dbReference type="InterPro" id="IPR043141">
    <property type="entry name" value="Ribosomal_uL10-like_sf"/>
</dbReference>
<dbReference type="InterPro" id="IPR022973">
    <property type="entry name" value="Ribosomal_uL10_bac"/>
</dbReference>
<dbReference type="InterPro" id="IPR047865">
    <property type="entry name" value="Ribosomal_uL10_bac_type"/>
</dbReference>
<dbReference type="InterPro" id="IPR002363">
    <property type="entry name" value="Ribosomal_uL10_CS_bac"/>
</dbReference>
<dbReference type="NCBIfam" id="NF000955">
    <property type="entry name" value="PRK00099.1-1"/>
    <property type="match status" value="1"/>
</dbReference>
<dbReference type="PANTHER" id="PTHR11560">
    <property type="entry name" value="39S RIBOSOMAL PROTEIN L10, MITOCHONDRIAL"/>
    <property type="match status" value="1"/>
</dbReference>
<dbReference type="Pfam" id="PF00466">
    <property type="entry name" value="Ribosomal_L10"/>
    <property type="match status" value="1"/>
</dbReference>
<dbReference type="SUPFAM" id="SSF160369">
    <property type="entry name" value="Ribosomal protein L10-like"/>
    <property type="match status" value="1"/>
</dbReference>
<dbReference type="PROSITE" id="PS01109">
    <property type="entry name" value="RIBOSOMAL_L10"/>
    <property type="match status" value="1"/>
</dbReference>
<keyword id="KW-0687">Ribonucleoprotein</keyword>
<keyword id="KW-0689">Ribosomal protein</keyword>
<keyword id="KW-0694">RNA-binding</keyword>
<keyword id="KW-0699">rRNA-binding</keyword>
<evidence type="ECO:0000255" key="1">
    <source>
        <dbReference type="HAMAP-Rule" id="MF_00362"/>
    </source>
</evidence>
<evidence type="ECO:0000305" key="2"/>
<comment type="function">
    <text evidence="1">Forms part of the ribosomal stalk, playing a central role in the interaction of the ribosome with GTP-bound translation factors.</text>
</comment>
<comment type="subunit">
    <text evidence="1">Part of the ribosomal stalk of the 50S ribosomal subunit. The N-terminus interacts with L11 and the large rRNA to form the base of the stalk. The C-terminus forms an elongated spine to which L12 dimers bind in a sequential fashion forming a multimeric L10(L12)X complex.</text>
</comment>
<comment type="similarity">
    <text evidence="1">Belongs to the universal ribosomal protein uL10 family.</text>
</comment>
<name>RL10_VIBVU</name>
<protein>
    <recommendedName>
        <fullName evidence="1">Large ribosomal subunit protein uL10</fullName>
    </recommendedName>
    <alternativeName>
        <fullName evidence="2">50S ribosomal protein L10</fullName>
    </alternativeName>
</protein>
<accession>Q8DD22</accession>
<feature type="chain" id="PRO_0000154745" description="Large ribosomal subunit protein uL10">
    <location>
        <begin position="1"/>
        <end position="162"/>
    </location>
</feature>
<organism>
    <name type="scientific">Vibrio vulnificus (strain CMCP6)</name>
    <dbReference type="NCBI Taxonomy" id="216895"/>
    <lineage>
        <taxon>Bacteria</taxon>
        <taxon>Pseudomonadati</taxon>
        <taxon>Pseudomonadota</taxon>
        <taxon>Gammaproteobacteria</taxon>
        <taxon>Vibrionales</taxon>
        <taxon>Vibrionaceae</taxon>
        <taxon>Vibrio</taxon>
    </lineage>
</organism>
<sequence length="162" mass="17353">MALNLQDKKAIVAEVNEAAAGALSAVVADSRGVSVDAMTTLRKQAREAGVYMKVVRNTLARRAVEGTQYECLTDTFTGPSLIAFSNEHPGAAARLFKDFAKENKKFEIKAAAFEGALTDAEVLATLPTYDEAIARLMMCLKEASAGKLVRTIAAIRDQKEAA</sequence>
<gene>
    <name evidence="1" type="primary">rplJ</name>
    <name type="ordered locus">VV1_1209</name>
</gene>
<reference key="1">
    <citation type="submission" date="2002-12" db="EMBL/GenBank/DDBJ databases">
        <title>Complete genome sequence of Vibrio vulnificus CMCP6.</title>
        <authorList>
            <person name="Rhee J.H."/>
            <person name="Kim S.Y."/>
            <person name="Chung S.S."/>
            <person name="Kim J.J."/>
            <person name="Moon Y.H."/>
            <person name="Jeong H."/>
            <person name="Choy H.E."/>
        </authorList>
    </citation>
    <scope>NUCLEOTIDE SEQUENCE [LARGE SCALE GENOMIC DNA]</scope>
    <source>
        <strain>CMCP6</strain>
    </source>
</reference>
<proteinExistence type="inferred from homology"/>